<comment type="function">
    <text evidence="2">Lipoamide dehydrogenase is an essential component of the pyruvate dehydrogenase (PDH) and 2-oxoglutarate dehydrogenase (ODH) complexes. Catalyzes the reoxidation of dihydrolipoyl groups which are covalently attached to the lipoate acyltransferase components (E2) of the complexes. Also catalyzes a reversible NADH:NAD(+) transhydrogenation, and is able to transfer electrons from NADH to various redox-active compounds and quinones. May be involved in quinone redox cycling in C.glutamicum.</text>
</comment>
<comment type="catalytic activity">
    <reaction evidence="2">
        <text>N(6)-[(R)-dihydrolipoyl]-L-lysyl-[protein] + NAD(+) = N(6)-[(R)-lipoyl]-L-lysyl-[protein] + NADH + H(+)</text>
        <dbReference type="Rhea" id="RHEA:15045"/>
        <dbReference type="Rhea" id="RHEA-COMP:10474"/>
        <dbReference type="Rhea" id="RHEA-COMP:10475"/>
        <dbReference type="ChEBI" id="CHEBI:15378"/>
        <dbReference type="ChEBI" id="CHEBI:57540"/>
        <dbReference type="ChEBI" id="CHEBI:57945"/>
        <dbReference type="ChEBI" id="CHEBI:83099"/>
        <dbReference type="ChEBI" id="CHEBI:83100"/>
        <dbReference type="EC" id="1.8.1.4"/>
    </reaction>
</comment>
<comment type="cofactor">
    <cofactor evidence="2">
        <name>FAD</name>
        <dbReference type="ChEBI" id="CHEBI:57692"/>
    </cofactor>
    <text evidence="2">Binds 1 FAD per subunit.</text>
</comment>
<comment type="biophysicochemical properties">
    <kinetics>
        <KM evidence="2">0.636 uM for lipoate</KM>
    </kinetics>
    <phDependence>
        <text evidence="2">Optimum pH is 7.0-7.5 for the reduction of lipoate by NADH.</text>
    </phDependence>
    <temperatureDependence>
        <text evidence="2">Optimum temperature is 50 degrees Celsius for the reduction of lipoate by NADH.</text>
    </temperatureDependence>
</comment>
<comment type="pathway">
    <text>Carbohydrate metabolism; tricarboxylic acid cycle; succinyl-CoA from 2-oxoglutarate (dehydrogenase route): step 1/1.</text>
</comment>
<comment type="subunit">
    <text evidence="1 3">Homodimer (By similarity). Part of an unusual ODH/PDH supercomplex, consisting of AceE (E1), AceF (E2), and Lpd (E3) together with OdhA (E1+E2).</text>
</comment>
<comment type="subcellular location">
    <subcellularLocation>
        <location evidence="2">Cytoplasm</location>
    </subcellularLocation>
</comment>
<comment type="miscellaneous">
    <text evidence="1">The active site is a redox-active disulfide bond.</text>
</comment>
<comment type="miscellaneous">
    <text>Overexpression of LPD enhances sensitivity to menadione, but has no effect on sensitivity to paraquat or hydrogen peroxide.</text>
</comment>
<comment type="similarity">
    <text evidence="4">Belongs to the class-I pyridine nucleotide-disulfide oxidoreductase family.</text>
</comment>
<evidence type="ECO:0000250" key="1"/>
<evidence type="ECO:0000269" key="2">
    <source>
    </source>
</evidence>
<evidence type="ECO:0000269" key="3">
    <source>
    </source>
</evidence>
<evidence type="ECO:0000305" key="4"/>
<feature type="initiator methionine" description="Removed" evidence="2">
    <location>
        <position position="1"/>
    </location>
</feature>
<feature type="chain" id="PRO_0000420523" description="Dihydrolipoyl dehydrogenase">
    <location>
        <begin position="2"/>
        <end position="469"/>
    </location>
</feature>
<feature type="active site" description="Proton acceptor" evidence="1">
    <location>
        <position position="448"/>
    </location>
</feature>
<feature type="binding site" evidence="1">
    <location>
        <begin position="34"/>
        <end position="42"/>
    </location>
    <ligand>
        <name>FAD</name>
        <dbReference type="ChEBI" id="CHEBI:57692"/>
    </ligand>
</feature>
<feature type="binding site" evidence="1">
    <location>
        <position position="51"/>
    </location>
    <ligand>
        <name>FAD</name>
        <dbReference type="ChEBI" id="CHEBI:57692"/>
    </ligand>
</feature>
<feature type="binding site" evidence="1">
    <location>
        <position position="114"/>
    </location>
    <ligand>
        <name>FAD</name>
        <dbReference type="ChEBI" id="CHEBI:57692"/>
    </ligand>
</feature>
<feature type="binding site" evidence="1">
    <location>
        <begin position="179"/>
        <end position="183"/>
    </location>
    <ligand>
        <name>NAD(+)</name>
        <dbReference type="ChEBI" id="CHEBI:57540"/>
    </ligand>
</feature>
<feature type="binding site" evidence="1">
    <location>
        <position position="202"/>
    </location>
    <ligand>
        <name>NAD(+)</name>
        <dbReference type="ChEBI" id="CHEBI:57540"/>
    </ligand>
</feature>
<feature type="binding site" evidence="1">
    <location>
        <begin position="269"/>
        <end position="272"/>
    </location>
    <ligand>
        <name>NAD(+)</name>
        <dbReference type="ChEBI" id="CHEBI:57540"/>
    </ligand>
</feature>
<feature type="binding site" evidence="1">
    <location>
        <position position="312"/>
    </location>
    <ligand>
        <name>FAD</name>
        <dbReference type="ChEBI" id="CHEBI:57692"/>
    </ligand>
</feature>
<feature type="binding site" evidence="1">
    <location>
        <position position="320"/>
    </location>
    <ligand>
        <name>FAD</name>
        <dbReference type="ChEBI" id="CHEBI:57692"/>
    </ligand>
</feature>
<feature type="disulfide bond" description="Redox-active" evidence="1">
    <location>
        <begin position="42"/>
        <end position="47"/>
    </location>
</feature>
<feature type="sequence conflict" description="In Ref. 1; CAA76340." evidence="4" ref="1">
    <original>F</original>
    <variation>L</variation>
    <location>
        <position position="382"/>
    </location>
</feature>
<name>DLDH_CORGL</name>
<sequence length="469" mass="50652">MTEHYDVVVLGAGPGGYVSAIRAAQLGKKVAVIEKQYWGGVCLNVGCIPSKSLIKNAEVAHTFTHEKKTFGINGEVTFNYEDAHKRSRGVSDKIVGGVHYLMKKNKIIEIHGLGNFKDAKTLEVTDGKDAGKTITFDDCIIATGSVVNTLRGVDFSENVVSFEEQILNPVAPKKMVIVGAGAIGMEFAYVLGNYGVDVTVIEFMDRVLPNEDAEVSKVIAKAYKKMGVKLLPGHATTAVRDNGDFVEVDYQKKGSDKTETLTVDRVMVSVGFRPRVEGFGLENTGVKLTERGAIEIDDYMRTNVDGIYAIGDVTAKLQLAHVAEAQGIVAAETIAGAETQTLGDYMMMPRATFCNPQVSSFGYTEEQAKEKWPDREIKVASFPFSANGKAVGLAETDGFAKIVADAEFGELLGAHLVGANASELINELVLAQNWDLTTEEISRSVHIHPTLSEAVKEAAHGISGHMINF</sequence>
<reference key="1">
    <citation type="journal article" date="2001" name="Microbiology">
        <title>Lipoamide dehydrogenase from Corynebacterium glutamicum: molecular and physiological analysis of the lpd gene and characterization of the enzyme.</title>
        <authorList>
            <person name="Schwinde J.W."/>
            <person name="Hertz P.F."/>
            <person name="Sahm H."/>
            <person name="Eikmanns B.J."/>
            <person name="Guyonvarch A."/>
        </authorList>
    </citation>
    <scope>NUCLEOTIDE SEQUENCE [GENOMIC DNA]</scope>
    <scope>PROTEIN SEQUENCE OF 2-15</scope>
    <scope>FUNCTION</scope>
    <scope>CATALYTIC ACTIVITY</scope>
    <scope>COFACTOR</scope>
    <scope>BIOPHYSICOCHEMICAL PROPERTIES</scope>
    <scope>SUBCELLULAR LOCATION</scope>
    <source>
        <strain>ATCC 13032 / DSM 20300 / JCM 1318 / BCRC 11384 / CCUG 27702 / LMG 3730 / NBRC 12168 / NCIMB 10025 / NRRL B-2784 / 534</strain>
    </source>
</reference>
<reference key="2">
    <citation type="journal article" date="2003" name="Appl. Microbiol. Biotechnol.">
        <title>The Corynebacterium glutamicum genome: features and impacts on biotechnological processes.</title>
        <authorList>
            <person name="Ikeda M."/>
            <person name="Nakagawa S."/>
        </authorList>
    </citation>
    <scope>NUCLEOTIDE SEQUENCE [LARGE SCALE GENOMIC DNA]</scope>
    <source>
        <strain>ATCC 13032 / DSM 20300 / JCM 1318 / BCRC 11384 / CCUG 27702 / LMG 3730 / NBRC 12168 / NCIMB 10025 / NRRL B-2784 / 534</strain>
    </source>
</reference>
<reference key="3">
    <citation type="journal article" date="2003" name="J. Biotechnol.">
        <title>The complete Corynebacterium glutamicum ATCC 13032 genome sequence and its impact on the production of L-aspartate-derived amino acids and vitamins.</title>
        <authorList>
            <person name="Kalinowski J."/>
            <person name="Bathe B."/>
            <person name="Bartels D."/>
            <person name="Bischoff N."/>
            <person name="Bott M."/>
            <person name="Burkovski A."/>
            <person name="Dusch N."/>
            <person name="Eggeling L."/>
            <person name="Eikmanns B.J."/>
            <person name="Gaigalat L."/>
            <person name="Goesmann A."/>
            <person name="Hartmann M."/>
            <person name="Huthmacher K."/>
            <person name="Kraemer R."/>
            <person name="Linke B."/>
            <person name="McHardy A.C."/>
            <person name="Meyer F."/>
            <person name="Moeckel B."/>
            <person name="Pfefferle W."/>
            <person name="Puehler A."/>
            <person name="Rey D.A."/>
            <person name="Rueckert C."/>
            <person name="Rupp O."/>
            <person name="Sahm H."/>
            <person name="Wendisch V.F."/>
            <person name="Wiegraebe I."/>
            <person name="Tauch A."/>
        </authorList>
    </citation>
    <scope>NUCLEOTIDE SEQUENCE [LARGE SCALE GENOMIC DNA]</scope>
    <source>
        <strain>ATCC 13032 / DSM 20300 / JCM 1318 / BCRC 11384 / CCUG 27702 / LMG 3730 / NBRC 12168 / NCIMB 10025 / NRRL B-2784 / 534</strain>
    </source>
</reference>
<reference key="4">
    <citation type="journal article" date="2006" name="J. Biol. Chem.">
        <title>Corynebacterial protein kinase G controls 2-oxoglutarate dehydrogenase activity via the phosphorylation status of the OdhI protein.</title>
        <authorList>
            <person name="Niebisch A."/>
            <person name="Kabus A."/>
            <person name="Schultz C."/>
            <person name="Weil B."/>
            <person name="Bott M."/>
        </authorList>
    </citation>
    <scope>IDENTIFICATION IN THE ODH/PDH COMPLEX</scope>
    <source>
        <strain>ATCC 13032 / DSM 20300 / JCM 1318 / BCRC 11384 / CCUG 27702 / LMG 3730 / NBRC 12168 / NCIMB 10025 / NRRL B-2784 / 534</strain>
    </source>
</reference>
<keyword id="KW-0963">Cytoplasm</keyword>
<keyword id="KW-0903">Direct protein sequencing</keyword>
<keyword id="KW-1015">Disulfide bond</keyword>
<keyword id="KW-0274">FAD</keyword>
<keyword id="KW-0285">Flavoprotein</keyword>
<keyword id="KW-0520">NAD</keyword>
<keyword id="KW-0560">Oxidoreductase</keyword>
<keyword id="KW-0676">Redox-active center</keyword>
<keyword id="KW-1185">Reference proteome</keyword>
<protein>
    <recommendedName>
        <fullName>Dihydrolipoyl dehydrogenase</fullName>
        <shortName>LPD</shortName>
        <ecNumber>1.8.1.4</ecNumber>
    </recommendedName>
    <alternativeName>
        <fullName>Dihydrolipoamide dehydrogenase</fullName>
    </alternativeName>
    <alternativeName>
        <fullName>E3 component of alpha-ketoacid dehydrogenase complexes</fullName>
    </alternativeName>
</protein>
<accession>Q8NTE1</accession>
<accession>Q6M7Z6</accession>
<accession>Q9Z466</accession>
<organism>
    <name type="scientific">Corynebacterium glutamicum (strain ATCC 13032 / DSM 20300 / JCM 1318 / BCRC 11384 / CCUG 27702 / LMG 3730 / NBRC 12168 / NCIMB 10025 / NRRL B-2784 / 534)</name>
    <dbReference type="NCBI Taxonomy" id="196627"/>
    <lineage>
        <taxon>Bacteria</taxon>
        <taxon>Bacillati</taxon>
        <taxon>Actinomycetota</taxon>
        <taxon>Actinomycetes</taxon>
        <taxon>Mycobacteriales</taxon>
        <taxon>Corynebacteriaceae</taxon>
        <taxon>Corynebacterium</taxon>
    </lineage>
</organism>
<dbReference type="EC" id="1.8.1.4"/>
<dbReference type="EMBL" id="Y16642">
    <property type="protein sequence ID" value="CAA76340.1"/>
    <property type="molecule type" value="Genomic_DNA"/>
</dbReference>
<dbReference type="EMBL" id="BA000036">
    <property type="protein sequence ID" value="BAB97759.1"/>
    <property type="molecule type" value="Genomic_DNA"/>
</dbReference>
<dbReference type="EMBL" id="BX927149">
    <property type="protein sequence ID" value="CAF19080.1"/>
    <property type="molecule type" value="Genomic_DNA"/>
</dbReference>
<dbReference type="RefSeq" id="NP_599614.1">
    <property type="nucleotide sequence ID" value="NC_003450.3"/>
</dbReference>
<dbReference type="SMR" id="Q8NTE1"/>
<dbReference type="STRING" id="196627.cg0441"/>
<dbReference type="KEGG" id="cgb:cg0441"/>
<dbReference type="KEGG" id="cgl:Cgl0366"/>
<dbReference type="PATRIC" id="fig|196627.13.peg.366"/>
<dbReference type="eggNOG" id="COG1249">
    <property type="taxonomic scope" value="Bacteria"/>
</dbReference>
<dbReference type="HOGENOM" id="CLU_016755_0_2_11"/>
<dbReference type="OrthoDB" id="9800167at2"/>
<dbReference type="BioCyc" id="CORYNE:G18NG-9923-MONOMER"/>
<dbReference type="BRENDA" id="1.2.1.104">
    <property type="organism ID" value="960"/>
</dbReference>
<dbReference type="BRENDA" id="1.2.1.105">
    <property type="organism ID" value="960"/>
</dbReference>
<dbReference type="BRENDA" id="1.8.1.4">
    <property type="organism ID" value="960"/>
</dbReference>
<dbReference type="SABIO-RK" id="Q8NTE1"/>
<dbReference type="UniPathway" id="UPA00223">
    <property type="reaction ID" value="UER00997"/>
</dbReference>
<dbReference type="Proteomes" id="UP000000582">
    <property type="component" value="Chromosome"/>
</dbReference>
<dbReference type="Proteomes" id="UP000001009">
    <property type="component" value="Chromosome"/>
</dbReference>
<dbReference type="GO" id="GO:0005737">
    <property type="term" value="C:cytoplasm"/>
    <property type="evidence" value="ECO:0007669"/>
    <property type="project" value="UniProtKB-SubCell"/>
</dbReference>
<dbReference type="GO" id="GO:0004148">
    <property type="term" value="F:dihydrolipoyl dehydrogenase (NADH) activity"/>
    <property type="evidence" value="ECO:0007669"/>
    <property type="project" value="UniProtKB-EC"/>
</dbReference>
<dbReference type="GO" id="GO:0050660">
    <property type="term" value="F:flavin adenine dinucleotide binding"/>
    <property type="evidence" value="ECO:0007669"/>
    <property type="project" value="InterPro"/>
</dbReference>
<dbReference type="GO" id="GO:0006103">
    <property type="term" value="P:2-oxoglutarate metabolic process"/>
    <property type="evidence" value="ECO:0007669"/>
    <property type="project" value="TreeGrafter"/>
</dbReference>
<dbReference type="GO" id="GO:0006099">
    <property type="term" value="P:tricarboxylic acid cycle"/>
    <property type="evidence" value="ECO:0007669"/>
    <property type="project" value="UniProtKB-UniPathway"/>
</dbReference>
<dbReference type="FunFam" id="3.30.390.30:FF:000001">
    <property type="entry name" value="Dihydrolipoyl dehydrogenase"/>
    <property type="match status" value="1"/>
</dbReference>
<dbReference type="Gene3D" id="3.30.390.30">
    <property type="match status" value="1"/>
</dbReference>
<dbReference type="Gene3D" id="3.50.50.60">
    <property type="entry name" value="FAD/NAD(P)-binding domain"/>
    <property type="match status" value="2"/>
</dbReference>
<dbReference type="InterPro" id="IPR050151">
    <property type="entry name" value="Class-I_Pyr_Nuc-Dis_Oxidored"/>
</dbReference>
<dbReference type="InterPro" id="IPR036188">
    <property type="entry name" value="FAD/NAD-bd_sf"/>
</dbReference>
<dbReference type="InterPro" id="IPR023753">
    <property type="entry name" value="FAD/NAD-binding_dom"/>
</dbReference>
<dbReference type="InterPro" id="IPR016156">
    <property type="entry name" value="FAD/NAD-linked_Rdtase_dimer_sf"/>
</dbReference>
<dbReference type="InterPro" id="IPR006258">
    <property type="entry name" value="Lipoamide_DH"/>
</dbReference>
<dbReference type="InterPro" id="IPR001100">
    <property type="entry name" value="Pyr_nuc-diS_OxRdtase"/>
</dbReference>
<dbReference type="InterPro" id="IPR004099">
    <property type="entry name" value="Pyr_nucl-diS_OxRdtase_dimer"/>
</dbReference>
<dbReference type="InterPro" id="IPR012999">
    <property type="entry name" value="Pyr_OxRdtase_I_AS"/>
</dbReference>
<dbReference type="NCBIfam" id="TIGR01350">
    <property type="entry name" value="lipoamide_DH"/>
    <property type="match status" value="1"/>
</dbReference>
<dbReference type="PANTHER" id="PTHR22912:SF217">
    <property type="entry name" value="DIHYDROLIPOYL DEHYDROGENASE"/>
    <property type="match status" value="1"/>
</dbReference>
<dbReference type="PANTHER" id="PTHR22912">
    <property type="entry name" value="DISULFIDE OXIDOREDUCTASE"/>
    <property type="match status" value="1"/>
</dbReference>
<dbReference type="Pfam" id="PF07992">
    <property type="entry name" value="Pyr_redox_2"/>
    <property type="match status" value="1"/>
</dbReference>
<dbReference type="Pfam" id="PF02852">
    <property type="entry name" value="Pyr_redox_dim"/>
    <property type="match status" value="1"/>
</dbReference>
<dbReference type="PIRSF" id="PIRSF000350">
    <property type="entry name" value="Mercury_reductase_MerA"/>
    <property type="match status" value="1"/>
</dbReference>
<dbReference type="PRINTS" id="PR00368">
    <property type="entry name" value="FADPNR"/>
</dbReference>
<dbReference type="PRINTS" id="PR00411">
    <property type="entry name" value="PNDRDTASEI"/>
</dbReference>
<dbReference type="SUPFAM" id="SSF51905">
    <property type="entry name" value="FAD/NAD(P)-binding domain"/>
    <property type="match status" value="1"/>
</dbReference>
<dbReference type="SUPFAM" id="SSF55424">
    <property type="entry name" value="FAD/NAD-linked reductases, dimerisation (C-terminal) domain"/>
    <property type="match status" value="1"/>
</dbReference>
<dbReference type="PROSITE" id="PS00076">
    <property type="entry name" value="PYRIDINE_REDOX_1"/>
    <property type="match status" value="1"/>
</dbReference>
<gene>
    <name type="primary">lpd</name>
    <name type="ordered locus">Cgl0366</name>
    <name type="ordered locus">cg0441</name>
</gene>
<proteinExistence type="evidence at protein level"/>